<name>PVK3_ERGCA</name>
<comment type="function">
    <text evidence="4">Mediates visceral muscle contractile activity (myotropic activity).</text>
</comment>
<comment type="subcellular location">
    <subcellularLocation>
        <location evidence="4">Secreted</location>
    </subcellularLocation>
</comment>
<comment type="similarity">
    <text evidence="1">Belongs to the periviscerokinin family.</text>
</comment>
<keyword id="KW-0027">Amidation</keyword>
<keyword id="KW-0903">Direct protein sequencing</keyword>
<keyword id="KW-0527">Neuropeptide</keyword>
<keyword id="KW-0964">Secreted</keyword>
<accession>P85610</accession>
<feature type="peptide" id="PRO_0000378829" description="Periviscerokinin-3" evidence="2">
    <location>
        <begin position="1"/>
        <end position="10"/>
    </location>
</feature>
<feature type="modified residue" description="Valine amide" evidence="2">
    <location>
        <position position="10"/>
    </location>
</feature>
<reference evidence="4" key="1">
    <citation type="journal article" date="2009" name="BMC Evol. Biol.">
        <title>A proteomic approach for studying insect phylogeny: CAPA peptides of ancient insect taxa (Dictyoptera, Blattoptera) as a test case.</title>
        <authorList>
            <person name="Roth S."/>
            <person name="Fromm B."/>
            <person name="Gaede G."/>
            <person name="Predel R."/>
        </authorList>
    </citation>
    <scope>PROTEIN SEQUENCE</scope>
    <scope>AMIDATION AT VAL-10</scope>
    <source>
        <tissue evidence="2">Abdominal perisympathetic organs</tissue>
    </source>
</reference>
<sequence>PQLGLPFPRV</sequence>
<evidence type="ECO:0000255" key="1"/>
<evidence type="ECO:0000269" key="2">
    <source>
    </source>
</evidence>
<evidence type="ECO:0000303" key="3">
    <source>
    </source>
</evidence>
<evidence type="ECO:0000305" key="4"/>
<protein>
    <recommendedName>
        <fullName evidence="3">Periviscerokinin-3</fullName>
        <shortName evidence="3">ErgCa-PVK-3</shortName>
    </recommendedName>
</protein>
<organism>
    <name type="scientific">Ergaula capucina</name>
    <name type="common">Beetle roach</name>
    <dbReference type="NCBI Taxonomy" id="76901"/>
    <lineage>
        <taxon>Eukaryota</taxon>
        <taxon>Metazoa</taxon>
        <taxon>Ecdysozoa</taxon>
        <taxon>Arthropoda</taxon>
        <taxon>Hexapoda</taxon>
        <taxon>Insecta</taxon>
        <taxon>Pterygota</taxon>
        <taxon>Neoptera</taxon>
        <taxon>Polyneoptera</taxon>
        <taxon>Dictyoptera</taxon>
        <taxon>Blattodea</taxon>
        <taxon>Corydioidea</taxon>
        <taxon>Corydiidae</taxon>
        <taxon>Ergaula</taxon>
    </lineage>
</organism>
<dbReference type="GO" id="GO:0005576">
    <property type="term" value="C:extracellular region"/>
    <property type="evidence" value="ECO:0007669"/>
    <property type="project" value="UniProtKB-SubCell"/>
</dbReference>
<dbReference type="GO" id="GO:0007218">
    <property type="term" value="P:neuropeptide signaling pathway"/>
    <property type="evidence" value="ECO:0007669"/>
    <property type="project" value="UniProtKB-KW"/>
</dbReference>
<proteinExistence type="evidence at protein level"/>